<organismHost>
    <name type="scientific">Homo sapiens</name>
    <name type="common">Human</name>
    <dbReference type="NCBI Taxonomy" id="9606"/>
</organismHost>
<sequence>MAMFYAHALGGYDENLHAFPGISSTVANDVRKYSVVSVYNNKYDIVKDKYMWCYSQVNKRYIGALLPMFECNEYLQIGDPIHDQEGNQISIITYRHKNYYALSGIGYESLDLCLEGVGIHHHVLETGNAVYGKVQHDYSTIKEKAKEMSTLSPGPIIDYHVWIGDCICQVTAVDVHGKEIMRMRFKKGAVLPIPNLVKVKLGENDTENLSSTISAAPSR</sequence>
<keyword id="KW-0244">Early protein</keyword>
<keyword id="KW-0378">Hydrolase</keyword>
<keyword id="KW-0540">Nuclease</keyword>
<keyword id="KW-1185">Reference proteome</keyword>
<reference key="1">
    <citation type="journal article" date="1990" name="Virology">
        <title>The complete DNA sequence of vaccinia virus.</title>
        <authorList>
            <person name="Goebel S.J."/>
            <person name="Johnson G.P."/>
            <person name="Perkus M.E."/>
            <person name="Davis S.W."/>
            <person name="Winslow J.P."/>
            <person name="Paoletti E."/>
        </authorList>
    </citation>
    <scope>NUCLEOTIDE SEQUENCE [LARGE SCALE GENOMIC DNA]</scope>
</reference>
<reference key="2">
    <citation type="journal article" date="1990" name="Virology">
        <title>Appendix to 'The complete DNA sequence of vaccinia virus'.</title>
        <authorList>
            <person name="Goebel S.J."/>
            <person name="Johnson G.P."/>
            <person name="Perkus M.E."/>
            <person name="Davis S.W."/>
            <person name="Winslow J.P."/>
            <person name="Paoletti E."/>
        </authorList>
    </citation>
    <scope>NUCLEOTIDE SEQUENCE [LARGE SCALE GENOMIC DNA]</scope>
</reference>
<name>POXIN_VACCC</name>
<proteinExistence type="evidence at transcript level"/>
<comment type="function">
    <text evidence="2">Nuclease that is responsible for viral evasion of host cGAS-STING innate immunity. Cleaves 2',3'-cGAMP which is produced by host cGAS following recognition of cytosolic DNA and blocks the subsequent 2',3'-cGAMP-mediated activation of TMEM173/STING, which normally spreads to adjacent cells and activates the interferon and NF-kappa-B immune responses.</text>
</comment>
<comment type="catalytic activity">
    <reaction evidence="2">
        <text>2',3'-cGAMP + H2O = Gp(2'-5')Ap(3') + H(+)</text>
        <dbReference type="Rhea" id="RHEA:59472"/>
        <dbReference type="ChEBI" id="CHEBI:15377"/>
        <dbReference type="ChEBI" id="CHEBI:15378"/>
        <dbReference type="ChEBI" id="CHEBI:143093"/>
        <dbReference type="ChEBI" id="CHEBI:143098"/>
    </reaction>
    <physiologicalReaction direction="left-to-right" evidence="2">
        <dbReference type="Rhea" id="RHEA:59473"/>
    </physiologicalReaction>
</comment>
<comment type="subunit">
    <text evidence="2">Homodimer.</text>
</comment>
<comment type="induction">
    <text>Expressed in the early phase of the viral replicative cycle.</text>
</comment>
<comment type="domain">
    <text evidence="2">The substrate binding site is formed by the N-terminus of a monomer and the C-terminus of the opposite monomer.</text>
</comment>
<comment type="similarity">
    <text evidence="2">Belongs to the poxin family.</text>
</comment>
<organism>
    <name type="scientific">Vaccinia virus (strain Copenhagen)</name>
    <name type="common">VACV</name>
    <dbReference type="NCBI Taxonomy" id="10249"/>
    <lineage>
        <taxon>Viruses</taxon>
        <taxon>Varidnaviria</taxon>
        <taxon>Bamfordvirae</taxon>
        <taxon>Nucleocytoviricota</taxon>
        <taxon>Pokkesviricetes</taxon>
        <taxon>Chitovirales</taxon>
        <taxon>Poxviridae</taxon>
        <taxon>Chordopoxvirinae</taxon>
        <taxon>Orthopoxvirus</taxon>
        <taxon>Vaccinia virus</taxon>
    </lineage>
</organism>
<protein>
    <recommendedName>
        <fullName evidence="2">Poxin</fullName>
        <ecNumber evidence="2">3.1.-.-</ecNumber>
    </recommendedName>
    <alternativeName>
        <fullName evidence="1">Immune nuclease</fullName>
    </alternativeName>
</protein>
<evidence type="ECO:0000250" key="1">
    <source>
        <dbReference type="UniProtKB" id="Q01225"/>
    </source>
</evidence>
<evidence type="ECO:0000255" key="2">
    <source>
        <dbReference type="HAMAP-Rule" id="MF_04143"/>
    </source>
</evidence>
<gene>
    <name type="primary">OPG188</name>
    <name type="ORF">B2R</name>
</gene>
<dbReference type="EC" id="3.1.-.-" evidence="2"/>
<dbReference type="EMBL" id="M35027">
    <property type="protein sequence ID" value="AAA48196.1"/>
    <property type="molecule type" value="Genomic_DNA"/>
</dbReference>
<dbReference type="PIR" id="A42526">
    <property type="entry name" value="A42526"/>
</dbReference>
<dbReference type="SMR" id="P20999"/>
<dbReference type="Proteomes" id="UP000008269">
    <property type="component" value="Segment"/>
</dbReference>
<dbReference type="GO" id="GO:0061507">
    <property type="term" value="F:2',3'-cyclic GMP-AMP binding"/>
    <property type="evidence" value="ECO:0007669"/>
    <property type="project" value="UniProtKB-UniRule"/>
</dbReference>
<dbReference type="GO" id="GO:0004518">
    <property type="term" value="F:nuclease activity"/>
    <property type="evidence" value="ECO:0007669"/>
    <property type="project" value="UniProtKB-UniRule"/>
</dbReference>
<dbReference type="GO" id="GO:0052170">
    <property type="term" value="P:symbiont-mediated suppression of host innate immune response"/>
    <property type="evidence" value="ECO:0007669"/>
    <property type="project" value="UniProtKB-UniRule"/>
</dbReference>
<dbReference type="HAMAP" id="MF_04143">
    <property type="entry name" value="Poxins"/>
    <property type="match status" value="1"/>
</dbReference>
<dbReference type="InterPro" id="IPR006853">
    <property type="entry name" value="Poxin_vir"/>
</dbReference>
<dbReference type="Pfam" id="PF04766">
    <property type="entry name" value="Baculo_p26"/>
    <property type="match status" value="1"/>
</dbReference>
<accession>P20999</accession>
<feature type="chain" id="PRO_0000099353" description="Poxin">
    <location>
        <begin position="1"/>
        <end position="219"/>
    </location>
</feature>
<feature type="active site" description="Proton donor" evidence="2">
    <location>
        <position position="17"/>
    </location>
</feature>
<feature type="active site" description="Shared with catalytic histidine of dimeric partner" evidence="2">
    <location>
        <position position="138"/>
    </location>
</feature>
<feature type="active site" description="Proton acceptor; shared with catalytic histidine of dimeric partner" evidence="2">
    <location>
        <position position="142"/>
    </location>
</feature>
<feature type="site" description="Substrate binding" evidence="2">
    <location>
        <position position="60"/>
    </location>
</feature>
<feature type="site" description="Substrate binding" evidence="2">
    <location>
        <position position="105"/>
    </location>
</feature>
<feature type="site" description="Substrate binding" evidence="2">
    <location>
        <position position="169"/>
    </location>
</feature>
<feature type="site" description="Substrate binding" evidence="2">
    <location>
        <position position="182"/>
    </location>
</feature>
<feature type="site" description="Substrate binding" evidence="2">
    <location>
        <position position="184"/>
    </location>
</feature>
<feature type="site" description="Substrate binding" evidence="2">
    <location>
        <position position="186"/>
    </location>
</feature>